<evidence type="ECO:0000255" key="1">
    <source>
        <dbReference type="PROSITE-ProRule" id="PRU00303"/>
    </source>
</evidence>
<evidence type="ECO:0000269" key="2">
    <source>
    </source>
</evidence>
<evidence type="ECO:0000303" key="3">
    <source>
    </source>
</evidence>
<evidence type="ECO:0000305" key="4"/>
<feature type="signal peptide" evidence="1">
    <location>
        <begin position="1"/>
        <end position="16"/>
    </location>
</feature>
<feature type="chain" id="PRO_0000168924" description="Outer membrane lipoprotein YnbE" evidence="1">
    <location>
        <begin position="17"/>
        <end position="61"/>
    </location>
</feature>
<feature type="lipid moiety-binding region" description="N-palmitoyl cysteine" evidence="1">
    <location>
        <position position="17"/>
    </location>
</feature>
<feature type="lipid moiety-binding region" description="S-diacylglycerol cysteine" evidence="1">
    <location>
        <position position="17"/>
    </location>
</feature>
<keyword id="KW-0998">Cell outer membrane</keyword>
<keyword id="KW-0449">Lipoprotein</keyword>
<keyword id="KW-0472">Membrane</keyword>
<keyword id="KW-0564">Palmitate</keyword>
<keyword id="KW-1185">Reference proteome</keyword>
<keyword id="KW-0732">Signal</keyword>
<accession>P64448</accession>
<accession>P76075</accession>
<accession>Q2MBD6</accession>
<reference key="1">
    <citation type="journal article" date="1997" name="Science">
        <title>The complete genome sequence of Escherichia coli K-12.</title>
        <authorList>
            <person name="Blattner F.R."/>
            <person name="Plunkett G. III"/>
            <person name="Bloch C.A."/>
            <person name="Perna N.T."/>
            <person name="Burland V."/>
            <person name="Riley M."/>
            <person name="Collado-Vides J."/>
            <person name="Glasner J.D."/>
            <person name="Rode C.K."/>
            <person name="Mayhew G.F."/>
            <person name="Gregor J."/>
            <person name="Davis N.W."/>
            <person name="Kirkpatrick H.A."/>
            <person name="Goeden M.A."/>
            <person name="Rose D.J."/>
            <person name="Mau B."/>
            <person name="Shao Y."/>
        </authorList>
    </citation>
    <scope>NUCLEOTIDE SEQUENCE [LARGE SCALE GENOMIC DNA]</scope>
    <source>
        <strain>K12 / MG1655 / ATCC 47076</strain>
    </source>
</reference>
<reference key="2">
    <citation type="journal article" date="2006" name="Mol. Syst. Biol.">
        <title>Highly accurate genome sequences of Escherichia coli K-12 strains MG1655 and W3110.</title>
        <authorList>
            <person name="Hayashi K."/>
            <person name="Morooka N."/>
            <person name="Yamamoto Y."/>
            <person name="Fujita K."/>
            <person name="Isono K."/>
            <person name="Choi S."/>
            <person name="Ohtsubo E."/>
            <person name="Baba T."/>
            <person name="Wanner B.L."/>
            <person name="Mori H."/>
            <person name="Horiuchi T."/>
        </authorList>
    </citation>
    <scope>NUCLEOTIDE SEQUENCE [LARGE SCALE GENOMIC DNA]</scope>
    <source>
        <strain>K12 / W3110 / ATCC 27325 / DSM 5911</strain>
    </source>
</reference>
<reference key="3">
    <citation type="journal article" date="2024" name="Proc. Natl. Acad. Sci. U.S.A.">
        <title>YdbH and YnbE form an intermembrane bridge to maintain lipid homeostasis in the outer membrane of Escherichia coli.</title>
        <authorList>
            <person name="Kumar S."/>
            <person name="Davis R.M."/>
            <person name="Ruiz N."/>
        </authorList>
    </citation>
    <scope>FUNCTION</scope>
    <scope>SUBUNIT</scope>
    <scope>INTERACTION WITH YDBH</scope>
    <scope>SUBCELLULAR LOCATION</scope>
    <scope>DISRUPTION PHENOTYPE</scope>
    <source>
        <strain>K12 / MG1655 / ATCC 47076</strain>
    </source>
</reference>
<sequence length="61" mass="6840">MKILLAALTSSFMLVGCTPRIEVAAPKEPITINMNVKIEHEIIIKADKDVEELLETRSDLF</sequence>
<gene>
    <name type="primary">ynbE</name>
    <name type="ordered locus">b1382</name>
    <name type="ordered locus">JW1377</name>
</gene>
<name>YNBE_ECOLI</name>
<organism>
    <name type="scientific">Escherichia coli (strain K12)</name>
    <dbReference type="NCBI Taxonomy" id="83333"/>
    <lineage>
        <taxon>Bacteria</taxon>
        <taxon>Pseudomonadati</taxon>
        <taxon>Pseudomonadota</taxon>
        <taxon>Gammaproteobacteria</taxon>
        <taxon>Enterobacterales</taxon>
        <taxon>Enterobacteriaceae</taxon>
        <taxon>Escherichia</taxon>
    </lineage>
</organism>
<dbReference type="EMBL" id="U00096">
    <property type="protein sequence ID" value="AAC74464.1"/>
    <property type="molecule type" value="Genomic_DNA"/>
</dbReference>
<dbReference type="EMBL" id="AP009048">
    <property type="protein sequence ID" value="BAE76420.1"/>
    <property type="molecule type" value="Genomic_DNA"/>
</dbReference>
<dbReference type="PIR" id="A64889">
    <property type="entry name" value="A64889"/>
</dbReference>
<dbReference type="RefSeq" id="NP_415900.1">
    <property type="nucleotide sequence ID" value="NC_000913.3"/>
</dbReference>
<dbReference type="RefSeq" id="WP_000698145.1">
    <property type="nucleotide sequence ID" value="NZ_SSZK01000012.1"/>
</dbReference>
<dbReference type="BioGRID" id="4262878">
    <property type="interactions" value="129"/>
</dbReference>
<dbReference type="FunCoup" id="P64448">
    <property type="interactions" value="2"/>
</dbReference>
<dbReference type="STRING" id="511145.b1382"/>
<dbReference type="jPOST" id="P64448"/>
<dbReference type="PaxDb" id="511145-b1382"/>
<dbReference type="EnsemblBacteria" id="AAC74464">
    <property type="protein sequence ID" value="AAC74464"/>
    <property type="gene ID" value="b1382"/>
</dbReference>
<dbReference type="GeneID" id="945946"/>
<dbReference type="KEGG" id="ecj:JW1377"/>
<dbReference type="KEGG" id="eco:b1382"/>
<dbReference type="KEGG" id="ecoc:C3026_08075"/>
<dbReference type="PATRIC" id="fig|1411691.4.peg.890"/>
<dbReference type="EchoBASE" id="EB4045"/>
<dbReference type="eggNOG" id="ENOG5032Y6T">
    <property type="taxonomic scope" value="Bacteria"/>
</dbReference>
<dbReference type="HOGENOM" id="CLU_183514_0_0_6"/>
<dbReference type="InParanoid" id="P64448"/>
<dbReference type="OMA" id="CTPRIEI"/>
<dbReference type="OrthoDB" id="9807866at2"/>
<dbReference type="PhylomeDB" id="P64448"/>
<dbReference type="BioCyc" id="EcoCyc:G6704-MONOMER"/>
<dbReference type="PRO" id="PR:P64448"/>
<dbReference type="Proteomes" id="UP000000625">
    <property type="component" value="Chromosome"/>
</dbReference>
<dbReference type="InterPro" id="IPR025985">
    <property type="entry name" value="YnbE-like"/>
</dbReference>
<dbReference type="Pfam" id="PF13617">
    <property type="entry name" value="Lipoprotein_19"/>
    <property type="match status" value="1"/>
</dbReference>
<dbReference type="PROSITE" id="PS51257">
    <property type="entry name" value="PROKAR_LIPOPROTEIN"/>
    <property type="match status" value="1"/>
</dbReference>
<protein>
    <recommendedName>
        <fullName evidence="3">Outer membrane lipoprotein YnbE</fullName>
    </recommendedName>
    <alternativeName>
        <fullName evidence="4">Probable phospholipid transport lipoprotein YnbE</fullName>
    </alternativeName>
</protein>
<comment type="function">
    <text evidence="2">Involved in outer membrane lipid homeostasis (PubMed:38748582). Interacts with the inner membrane protein YdbH to form a functional protein bridge connecting the inner and outer membranes of the cell (PubMed:38748582). Is required for YdbH's function and may facilitate phospholipid transport through the periplasm (PubMed:38748582).</text>
</comment>
<comment type="subunit">
    <text evidence="2">Forms multimers (PubMed:38748582). Interacts with the C-terminal region of the probable phospholipid transport protein YdbH (PubMed:38748582).</text>
</comment>
<comment type="subcellular location">
    <subcellularLocation>
        <location evidence="2">Cell outer membrane</location>
        <topology evidence="1">Lipid-anchor</topology>
    </subcellularLocation>
</comment>
<comment type="disruption phenotype">
    <text evidence="2">The deletion mutant does not show any growth or outer membrane permeability defects.</text>
</comment>
<comment type="similarity">
    <text evidence="4">Belongs to the lipoprotein YnbE family.</text>
</comment>
<proteinExistence type="evidence at protein level"/>